<evidence type="ECO:0000255" key="1">
    <source>
        <dbReference type="HAMAP-Rule" id="MF_00291"/>
    </source>
</evidence>
<evidence type="ECO:0000256" key="2">
    <source>
        <dbReference type="SAM" id="MobiDB-lite"/>
    </source>
</evidence>
<evidence type="ECO:0000305" key="3"/>
<name>RS2_MYCGA</name>
<reference key="1">
    <citation type="journal article" date="2003" name="Microbiology">
        <title>The complete genome sequence of the avian pathogen Mycoplasma gallisepticum strain R(low).</title>
        <authorList>
            <person name="Papazisi L."/>
            <person name="Gorton T.S."/>
            <person name="Kutish G."/>
            <person name="Markham P.F."/>
            <person name="Browning G.F."/>
            <person name="Nguyen D.K."/>
            <person name="Swartzell S."/>
            <person name="Madan A."/>
            <person name="Mahairas G."/>
            <person name="Geary S.J."/>
        </authorList>
    </citation>
    <scope>NUCLEOTIDE SEQUENCE [LARGE SCALE GENOMIC DNA]</scope>
    <source>
        <strain>R(low / passage 15 / clone 2)</strain>
    </source>
</reference>
<feature type="chain" id="PRO_0000352011" description="Small ribosomal subunit protein uS2">
    <location>
        <begin position="1"/>
        <end position="323"/>
    </location>
</feature>
<feature type="region of interest" description="Disordered" evidence="2">
    <location>
        <begin position="295"/>
        <end position="323"/>
    </location>
</feature>
<protein>
    <recommendedName>
        <fullName evidence="1">Small ribosomal subunit protein uS2</fullName>
    </recommendedName>
    <alternativeName>
        <fullName evidence="3">30S ribosomal protein S2</fullName>
    </alternativeName>
</protein>
<organism>
    <name type="scientific">Mycoplasmoides gallisepticum (strain R(low / passage 15 / clone 2))</name>
    <name type="common">Mycoplasma gallisepticum</name>
    <dbReference type="NCBI Taxonomy" id="710127"/>
    <lineage>
        <taxon>Bacteria</taxon>
        <taxon>Bacillati</taxon>
        <taxon>Mycoplasmatota</taxon>
        <taxon>Mycoplasmoidales</taxon>
        <taxon>Mycoplasmoidaceae</taxon>
        <taxon>Mycoplasmoides</taxon>
    </lineage>
</organism>
<dbReference type="EMBL" id="AE015450">
    <property type="protein sequence ID" value="AAP56873.1"/>
    <property type="molecule type" value="Genomic_DNA"/>
</dbReference>
<dbReference type="RefSeq" id="WP_011113775.1">
    <property type="nucleotide sequence ID" value="NC_004829.2"/>
</dbReference>
<dbReference type="SMR" id="Q7NAW2"/>
<dbReference type="KEGG" id="mga:MGA_0242"/>
<dbReference type="PATRIC" id="fig|233150.7.peg.587"/>
<dbReference type="HOGENOM" id="CLU_040318_0_0_14"/>
<dbReference type="OrthoDB" id="9808036at2"/>
<dbReference type="Proteomes" id="UP000001418">
    <property type="component" value="Chromosome"/>
</dbReference>
<dbReference type="GO" id="GO:0022627">
    <property type="term" value="C:cytosolic small ribosomal subunit"/>
    <property type="evidence" value="ECO:0007669"/>
    <property type="project" value="TreeGrafter"/>
</dbReference>
<dbReference type="GO" id="GO:0003735">
    <property type="term" value="F:structural constituent of ribosome"/>
    <property type="evidence" value="ECO:0007669"/>
    <property type="project" value="InterPro"/>
</dbReference>
<dbReference type="GO" id="GO:0006412">
    <property type="term" value="P:translation"/>
    <property type="evidence" value="ECO:0007669"/>
    <property type="project" value="UniProtKB-UniRule"/>
</dbReference>
<dbReference type="CDD" id="cd01425">
    <property type="entry name" value="RPS2"/>
    <property type="match status" value="1"/>
</dbReference>
<dbReference type="Gene3D" id="3.40.50.10490">
    <property type="entry name" value="Glucose-6-phosphate isomerase like protein, domain 1"/>
    <property type="match status" value="1"/>
</dbReference>
<dbReference type="Gene3D" id="1.10.287.610">
    <property type="entry name" value="Helix hairpin bin"/>
    <property type="match status" value="1"/>
</dbReference>
<dbReference type="HAMAP" id="MF_00291_B">
    <property type="entry name" value="Ribosomal_uS2_B"/>
    <property type="match status" value="1"/>
</dbReference>
<dbReference type="InterPro" id="IPR001865">
    <property type="entry name" value="Ribosomal_uS2"/>
</dbReference>
<dbReference type="InterPro" id="IPR005706">
    <property type="entry name" value="Ribosomal_uS2_bac/mit/plastid"/>
</dbReference>
<dbReference type="InterPro" id="IPR018130">
    <property type="entry name" value="Ribosomal_uS2_CS"/>
</dbReference>
<dbReference type="InterPro" id="IPR023591">
    <property type="entry name" value="Ribosomal_uS2_flav_dom_sf"/>
</dbReference>
<dbReference type="NCBIfam" id="TIGR01011">
    <property type="entry name" value="rpsB_bact"/>
    <property type="match status" value="1"/>
</dbReference>
<dbReference type="PANTHER" id="PTHR12534">
    <property type="entry name" value="30S RIBOSOMAL PROTEIN S2 PROKARYOTIC AND ORGANELLAR"/>
    <property type="match status" value="1"/>
</dbReference>
<dbReference type="PANTHER" id="PTHR12534:SF0">
    <property type="entry name" value="SMALL RIBOSOMAL SUBUNIT PROTEIN US2M"/>
    <property type="match status" value="1"/>
</dbReference>
<dbReference type="Pfam" id="PF00318">
    <property type="entry name" value="Ribosomal_S2"/>
    <property type="match status" value="1"/>
</dbReference>
<dbReference type="PRINTS" id="PR00395">
    <property type="entry name" value="RIBOSOMALS2"/>
</dbReference>
<dbReference type="SUPFAM" id="SSF52313">
    <property type="entry name" value="Ribosomal protein S2"/>
    <property type="match status" value="1"/>
</dbReference>
<dbReference type="PROSITE" id="PS00963">
    <property type="entry name" value="RIBOSOMAL_S2_2"/>
    <property type="match status" value="1"/>
</dbReference>
<proteinExistence type="inferred from homology"/>
<gene>
    <name evidence="1" type="primary">rpsB</name>
    <name type="ordered locus">MYCGA5230</name>
    <name type="ORF">MGA_0242</name>
</gene>
<keyword id="KW-1185">Reference proteome</keyword>
<keyword id="KW-0687">Ribonucleoprotein</keyword>
<keyword id="KW-0689">Ribosomal protein</keyword>
<comment type="similarity">
    <text evidence="1">Belongs to the universal ribosomal protein uS2 family.</text>
</comment>
<sequence>MFLFEDLNVESAQAVKAEESPAQTVQSKEEQVPANSTDKVLVTHTKLLDVGAFNGVAKRKWNPKMKHYIIPRNAAQFSAQFDLINSDLLNLKLHEAFNYLTEAAKAKKNILFVGTKSKAVQELIQSIAERTNSFYINQRWLGGTLTNFKTISNSINQLKRLIHTRDNDLTKYTKKEQIMIMKKLAKLERFFGGIKDMQGLPHVLVIDDPIKEKNAVTEARKLRIPVIALCNTNSDPNVITLPIPANNYNIRSVTLLLNLLGDAVALAQGNPAKFAFKPDEEIDIPQLVKKETRTVVNRDRAGFNKKQPKAEEAAKPAEKKAEK</sequence>
<accession>Q7NAW2</accession>